<dbReference type="EC" id="1.2.1.70" evidence="1"/>
<dbReference type="EMBL" id="CP000507">
    <property type="protein sequence ID" value="ABM00770.1"/>
    <property type="molecule type" value="Genomic_DNA"/>
</dbReference>
<dbReference type="RefSeq" id="WP_011760676.1">
    <property type="nucleotide sequence ID" value="NC_008700.1"/>
</dbReference>
<dbReference type="SMR" id="A1S8R3"/>
<dbReference type="STRING" id="326297.Sama_2567"/>
<dbReference type="KEGG" id="saz:Sama_2567"/>
<dbReference type="eggNOG" id="COG0373">
    <property type="taxonomic scope" value="Bacteria"/>
</dbReference>
<dbReference type="HOGENOM" id="CLU_035113_2_2_6"/>
<dbReference type="OrthoDB" id="110209at2"/>
<dbReference type="UniPathway" id="UPA00251">
    <property type="reaction ID" value="UER00316"/>
</dbReference>
<dbReference type="Proteomes" id="UP000009175">
    <property type="component" value="Chromosome"/>
</dbReference>
<dbReference type="GO" id="GO:0008883">
    <property type="term" value="F:glutamyl-tRNA reductase activity"/>
    <property type="evidence" value="ECO:0007669"/>
    <property type="project" value="UniProtKB-UniRule"/>
</dbReference>
<dbReference type="GO" id="GO:0050661">
    <property type="term" value="F:NADP binding"/>
    <property type="evidence" value="ECO:0007669"/>
    <property type="project" value="InterPro"/>
</dbReference>
<dbReference type="GO" id="GO:0019353">
    <property type="term" value="P:protoporphyrinogen IX biosynthetic process from glutamate"/>
    <property type="evidence" value="ECO:0007669"/>
    <property type="project" value="TreeGrafter"/>
</dbReference>
<dbReference type="CDD" id="cd05213">
    <property type="entry name" value="NAD_bind_Glutamyl_tRNA_reduct"/>
    <property type="match status" value="1"/>
</dbReference>
<dbReference type="FunFam" id="3.30.460.30:FF:000001">
    <property type="entry name" value="Glutamyl-tRNA reductase"/>
    <property type="match status" value="1"/>
</dbReference>
<dbReference type="FunFam" id="3.40.50.720:FF:000031">
    <property type="entry name" value="Glutamyl-tRNA reductase"/>
    <property type="match status" value="1"/>
</dbReference>
<dbReference type="Gene3D" id="3.30.460.30">
    <property type="entry name" value="Glutamyl-tRNA reductase, N-terminal domain"/>
    <property type="match status" value="1"/>
</dbReference>
<dbReference type="Gene3D" id="3.40.50.720">
    <property type="entry name" value="NAD(P)-binding Rossmann-like Domain"/>
    <property type="match status" value="1"/>
</dbReference>
<dbReference type="HAMAP" id="MF_00087">
    <property type="entry name" value="Glu_tRNA_reductase"/>
    <property type="match status" value="1"/>
</dbReference>
<dbReference type="InterPro" id="IPR000343">
    <property type="entry name" value="4pyrrol_synth_GluRdtase"/>
</dbReference>
<dbReference type="InterPro" id="IPR015896">
    <property type="entry name" value="4pyrrol_synth_GluRdtase_dimer"/>
</dbReference>
<dbReference type="InterPro" id="IPR015895">
    <property type="entry name" value="4pyrrol_synth_GluRdtase_N"/>
</dbReference>
<dbReference type="InterPro" id="IPR018214">
    <property type="entry name" value="GluRdtase_CS"/>
</dbReference>
<dbReference type="InterPro" id="IPR036453">
    <property type="entry name" value="GluRdtase_dimer_dom_sf"/>
</dbReference>
<dbReference type="InterPro" id="IPR036343">
    <property type="entry name" value="GluRdtase_N_sf"/>
</dbReference>
<dbReference type="InterPro" id="IPR036291">
    <property type="entry name" value="NAD(P)-bd_dom_sf"/>
</dbReference>
<dbReference type="InterPro" id="IPR006151">
    <property type="entry name" value="Shikm_DH/Glu-tRNA_Rdtase"/>
</dbReference>
<dbReference type="NCBIfam" id="TIGR01035">
    <property type="entry name" value="hemA"/>
    <property type="match status" value="1"/>
</dbReference>
<dbReference type="PANTHER" id="PTHR43013">
    <property type="entry name" value="GLUTAMYL-TRNA REDUCTASE"/>
    <property type="match status" value="1"/>
</dbReference>
<dbReference type="PANTHER" id="PTHR43013:SF1">
    <property type="entry name" value="GLUTAMYL-TRNA REDUCTASE"/>
    <property type="match status" value="1"/>
</dbReference>
<dbReference type="Pfam" id="PF00745">
    <property type="entry name" value="GlutR_dimer"/>
    <property type="match status" value="1"/>
</dbReference>
<dbReference type="Pfam" id="PF05201">
    <property type="entry name" value="GlutR_N"/>
    <property type="match status" value="1"/>
</dbReference>
<dbReference type="Pfam" id="PF01488">
    <property type="entry name" value="Shikimate_DH"/>
    <property type="match status" value="1"/>
</dbReference>
<dbReference type="PIRSF" id="PIRSF000445">
    <property type="entry name" value="4pyrrol_synth_GluRdtase"/>
    <property type="match status" value="1"/>
</dbReference>
<dbReference type="SUPFAM" id="SSF69742">
    <property type="entry name" value="Glutamyl tRNA-reductase catalytic, N-terminal domain"/>
    <property type="match status" value="1"/>
</dbReference>
<dbReference type="SUPFAM" id="SSF69075">
    <property type="entry name" value="Glutamyl tRNA-reductase dimerization domain"/>
    <property type="match status" value="1"/>
</dbReference>
<dbReference type="SUPFAM" id="SSF51735">
    <property type="entry name" value="NAD(P)-binding Rossmann-fold domains"/>
    <property type="match status" value="1"/>
</dbReference>
<dbReference type="PROSITE" id="PS00747">
    <property type="entry name" value="GLUTR"/>
    <property type="match status" value="1"/>
</dbReference>
<name>HEM1_SHEAM</name>
<evidence type="ECO:0000255" key="1">
    <source>
        <dbReference type="HAMAP-Rule" id="MF_00087"/>
    </source>
</evidence>
<accession>A1S8R3</accession>
<keyword id="KW-0521">NADP</keyword>
<keyword id="KW-0560">Oxidoreductase</keyword>
<keyword id="KW-0627">Porphyrin biosynthesis</keyword>
<keyword id="KW-1185">Reference proteome</keyword>
<proteinExistence type="inferred from homology"/>
<reference key="1">
    <citation type="submission" date="2006-12" db="EMBL/GenBank/DDBJ databases">
        <title>Complete sequence of Shewanella amazonensis SB2B.</title>
        <authorList>
            <consortium name="US DOE Joint Genome Institute"/>
            <person name="Copeland A."/>
            <person name="Lucas S."/>
            <person name="Lapidus A."/>
            <person name="Barry K."/>
            <person name="Detter J.C."/>
            <person name="Glavina del Rio T."/>
            <person name="Hammon N."/>
            <person name="Israni S."/>
            <person name="Dalin E."/>
            <person name="Tice H."/>
            <person name="Pitluck S."/>
            <person name="Munk A.C."/>
            <person name="Brettin T."/>
            <person name="Bruce D."/>
            <person name="Han C."/>
            <person name="Tapia R."/>
            <person name="Gilna P."/>
            <person name="Schmutz J."/>
            <person name="Larimer F."/>
            <person name="Land M."/>
            <person name="Hauser L."/>
            <person name="Kyrpides N."/>
            <person name="Mikhailova N."/>
            <person name="Fredrickson J."/>
            <person name="Richardson P."/>
        </authorList>
    </citation>
    <scope>NUCLEOTIDE SEQUENCE [LARGE SCALE GENOMIC DNA]</scope>
    <source>
        <strain>ATCC BAA-1098 / SB2B</strain>
    </source>
</reference>
<sequence>MSLVAIGINHKTATVDLREKVAFSPDKIHDAMRSLACTTSSNEAVIVSTCNRTELYCNNARAEEVIHWLESYHNLSHDELMPCVYHHEGQEAVRHLMRVASGLDSLVLGEPQILGQVKQSFAKAKEAGTVAVTLDRLFQSTFSVAKKVRTETEIGTAAVSVAFAAVSMAKHIFSSLASTKVLLIGAGETIELVARHLKENGVSSMVVANRTVERAQAMCEEFGATAITLSQIPDFLPKADIVISSTASPLPILGKGMVEKALKQRRHQPMLLVDIAVPRDIEAEVGELDDAFLYTVDDLQSIIEQNMASRKEAAEQAEVIAQEQSFLFMDWIRSLESVDSIREYRTASMAIKDELVERALNKLAQGADGEQVILELANKLTNRLIHAPTQALTTASRQGDLNTLGQLRTALGLDKH</sequence>
<gene>
    <name evidence="1" type="primary">hemA</name>
    <name type="ordered locus">Sama_2567</name>
</gene>
<organism>
    <name type="scientific">Shewanella amazonensis (strain ATCC BAA-1098 / SB2B)</name>
    <dbReference type="NCBI Taxonomy" id="326297"/>
    <lineage>
        <taxon>Bacteria</taxon>
        <taxon>Pseudomonadati</taxon>
        <taxon>Pseudomonadota</taxon>
        <taxon>Gammaproteobacteria</taxon>
        <taxon>Alteromonadales</taxon>
        <taxon>Shewanellaceae</taxon>
        <taxon>Shewanella</taxon>
    </lineage>
</organism>
<comment type="function">
    <text evidence="1">Catalyzes the NADPH-dependent reduction of glutamyl-tRNA(Glu) to glutamate 1-semialdehyde (GSA).</text>
</comment>
<comment type="catalytic activity">
    <reaction evidence="1">
        <text>(S)-4-amino-5-oxopentanoate + tRNA(Glu) + NADP(+) = L-glutamyl-tRNA(Glu) + NADPH + H(+)</text>
        <dbReference type="Rhea" id="RHEA:12344"/>
        <dbReference type="Rhea" id="RHEA-COMP:9663"/>
        <dbReference type="Rhea" id="RHEA-COMP:9680"/>
        <dbReference type="ChEBI" id="CHEBI:15378"/>
        <dbReference type="ChEBI" id="CHEBI:57501"/>
        <dbReference type="ChEBI" id="CHEBI:57783"/>
        <dbReference type="ChEBI" id="CHEBI:58349"/>
        <dbReference type="ChEBI" id="CHEBI:78442"/>
        <dbReference type="ChEBI" id="CHEBI:78520"/>
        <dbReference type="EC" id="1.2.1.70"/>
    </reaction>
</comment>
<comment type="pathway">
    <text evidence="1">Porphyrin-containing compound metabolism; protoporphyrin-IX biosynthesis; 5-aminolevulinate from L-glutamyl-tRNA(Glu): step 1/2.</text>
</comment>
<comment type="subunit">
    <text evidence="1">Homodimer.</text>
</comment>
<comment type="domain">
    <text evidence="1">Possesses an unusual extended V-shaped dimeric structure with each monomer consisting of three distinct domains arranged along a curved 'spinal' alpha-helix. The N-terminal catalytic domain specifically recognizes the glutamate moiety of the substrate. The second domain is the NADPH-binding domain, and the third C-terminal domain is responsible for dimerization.</text>
</comment>
<comment type="miscellaneous">
    <text evidence="1">During catalysis, the active site Cys acts as a nucleophile attacking the alpha-carbonyl group of tRNA-bound glutamate with the formation of a thioester intermediate between enzyme and glutamate, and the concomitant release of tRNA(Glu). The thioester intermediate is finally reduced by direct hydride transfer from NADPH, to form the product GSA.</text>
</comment>
<comment type="similarity">
    <text evidence="1">Belongs to the glutamyl-tRNA reductase family.</text>
</comment>
<protein>
    <recommendedName>
        <fullName evidence="1">Glutamyl-tRNA reductase</fullName>
        <shortName evidence="1">GluTR</shortName>
        <ecNumber evidence="1">1.2.1.70</ecNumber>
    </recommendedName>
</protein>
<feature type="chain" id="PRO_1000004685" description="Glutamyl-tRNA reductase">
    <location>
        <begin position="1"/>
        <end position="416"/>
    </location>
</feature>
<feature type="active site" description="Nucleophile" evidence="1">
    <location>
        <position position="50"/>
    </location>
</feature>
<feature type="binding site" evidence="1">
    <location>
        <begin position="49"/>
        <end position="52"/>
    </location>
    <ligand>
        <name>substrate</name>
    </ligand>
</feature>
<feature type="binding site" evidence="1">
    <location>
        <position position="105"/>
    </location>
    <ligand>
        <name>substrate</name>
    </ligand>
</feature>
<feature type="binding site" evidence="1">
    <location>
        <begin position="110"/>
        <end position="112"/>
    </location>
    <ligand>
        <name>substrate</name>
    </ligand>
</feature>
<feature type="binding site" evidence="1">
    <location>
        <position position="116"/>
    </location>
    <ligand>
        <name>substrate</name>
    </ligand>
</feature>
<feature type="binding site" evidence="1">
    <location>
        <begin position="185"/>
        <end position="190"/>
    </location>
    <ligand>
        <name>NADP(+)</name>
        <dbReference type="ChEBI" id="CHEBI:58349"/>
    </ligand>
</feature>
<feature type="site" description="Important for activity" evidence="1">
    <location>
        <position position="95"/>
    </location>
</feature>